<gene>
    <name type="primary">Arf4</name>
</gene>
<dbReference type="EMBL" id="L12383">
    <property type="protein sequence ID" value="AAA40688.1"/>
    <property type="molecule type" value="mRNA"/>
</dbReference>
<dbReference type="EMBL" id="BC063167">
    <property type="protein sequence ID" value="AAH63167.1"/>
    <property type="molecule type" value="mRNA"/>
</dbReference>
<dbReference type="PIR" id="I55371">
    <property type="entry name" value="I55371"/>
</dbReference>
<dbReference type="RefSeq" id="NP_077065.1">
    <property type="nucleotide sequence ID" value="NM_024151.2"/>
</dbReference>
<dbReference type="SMR" id="P61751"/>
<dbReference type="BioGRID" id="249404">
    <property type="interactions" value="3"/>
</dbReference>
<dbReference type="FunCoup" id="P61751">
    <property type="interactions" value="1957"/>
</dbReference>
<dbReference type="IntAct" id="P61751">
    <property type="interactions" value="3"/>
</dbReference>
<dbReference type="MINT" id="P61751"/>
<dbReference type="STRING" id="10116.ENSRNOP00000017692"/>
<dbReference type="iPTMnet" id="P61751"/>
<dbReference type="PhosphoSitePlus" id="P61751"/>
<dbReference type="SwissPalm" id="P61751"/>
<dbReference type="jPOST" id="P61751"/>
<dbReference type="PaxDb" id="10116-ENSRNOP00000017692"/>
<dbReference type="Ensembl" id="ENSRNOT00000017692.6">
    <property type="protein sequence ID" value="ENSRNOP00000017692.2"/>
    <property type="gene ID" value="ENSRNOG00000012623.6"/>
</dbReference>
<dbReference type="GeneID" id="79120"/>
<dbReference type="KEGG" id="rno:79120"/>
<dbReference type="UCSC" id="RGD:621275">
    <property type="organism name" value="rat"/>
</dbReference>
<dbReference type="AGR" id="RGD:621275"/>
<dbReference type="CTD" id="378"/>
<dbReference type="RGD" id="621275">
    <property type="gene designation" value="Arf4"/>
</dbReference>
<dbReference type="eggNOG" id="KOG0070">
    <property type="taxonomic scope" value="Eukaryota"/>
</dbReference>
<dbReference type="GeneTree" id="ENSGT00940000156297"/>
<dbReference type="HOGENOM" id="CLU_040729_9_3_1"/>
<dbReference type="InParanoid" id="P61751"/>
<dbReference type="OMA" id="DWLCNEL"/>
<dbReference type="OrthoDB" id="2011769at2759"/>
<dbReference type="PhylomeDB" id="P61751"/>
<dbReference type="TreeFam" id="TF300808"/>
<dbReference type="Reactome" id="R-RNO-5620916">
    <property type="pathway name" value="VxPx cargo-targeting to cilium"/>
</dbReference>
<dbReference type="Reactome" id="R-RNO-6807878">
    <property type="pathway name" value="COPI-mediated anterograde transport"/>
</dbReference>
<dbReference type="Reactome" id="R-RNO-6811434">
    <property type="pathway name" value="COPI-dependent Golgi-to-ER retrograde traffic"/>
</dbReference>
<dbReference type="PRO" id="PR:P61751"/>
<dbReference type="Proteomes" id="UP000002494">
    <property type="component" value="Chromosome 16"/>
</dbReference>
<dbReference type="Bgee" id="ENSRNOG00000012623">
    <property type="expression patterns" value="Expressed in jejunum and 20 other cell types or tissues"/>
</dbReference>
<dbReference type="GO" id="GO:0005737">
    <property type="term" value="C:cytoplasm"/>
    <property type="evidence" value="ECO:0000266"/>
    <property type="project" value="RGD"/>
</dbReference>
<dbReference type="GO" id="GO:0005829">
    <property type="term" value="C:cytosol"/>
    <property type="evidence" value="ECO:0000266"/>
    <property type="project" value="RGD"/>
</dbReference>
<dbReference type="GO" id="GO:0043197">
    <property type="term" value="C:dendritic spine"/>
    <property type="evidence" value="ECO:0000266"/>
    <property type="project" value="RGD"/>
</dbReference>
<dbReference type="GO" id="GO:0098978">
    <property type="term" value="C:glutamatergic synapse"/>
    <property type="evidence" value="ECO:0000266"/>
    <property type="project" value="RGD"/>
</dbReference>
<dbReference type="GO" id="GO:0005794">
    <property type="term" value="C:Golgi apparatus"/>
    <property type="evidence" value="ECO:0000266"/>
    <property type="project" value="RGD"/>
</dbReference>
<dbReference type="GO" id="GO:0000139">
    <property type="term" value="C:Golgi membrane"/>
    <property type="evidence" value="ECO:0000250"/>
    <property type="project" value="UniProtKB"/>
</dbReference>
<dbReference type="GO" id="GO:0005886">
    <property type="term" value="C:plasma membrane"/>
    <property type="evidence" value="ECO:0000266"/>
    <property type="project" value="RGD"/>
</dbReference>
<dbReference type="GO" id="GO:0032587">
    <property type="term" value="C:ruffle membrane"/>
    <property type="evidence" value="ECO:0000266"/>
    <property type="project" value="RGD"/>
</dbReference>
<dbReference type="GO" id="GO:0005154">
    <property type="term" value="F:epidermal growth factor receptor binding"/>
    <property type="evidence" value="ECO:0000266"/>
    <property type="project" value="RGD"/>
</dbReference>
<dbReference type="GO" id="GO:0005525">
    <property type="term" value="F:GTP binding"/>
    <property type="evidence" value="ECO:0000266"/>
    <property type="project" value="RGD"/>
</dbReference>
<dbReference type="GO" id="GO:0003924">
    <property type="term" value="F:GTPase activity"/>
    <property type="evidence" value="ECO:0007669"/>
    <property type="project" value="InterPro"/>
</dbReference>
<dbReference type="GO" id="GO:0106274">
    <property type="term" value="F:NAD+-protein-arginine ADP-ribosyltransferase activity"/>
    <property type="evidence" value="ECO:0000266"/>
    <property type="project" value="RGD"/>
</dbReference>
<dbReference type="GO" id="GO:1990583">
    <property type="term" value="F:phospholipase D activator activity"/>
    <property type="evidence" value="ECO:0000266"/>
    <property type="project" value="RGD"/>
</dbReference>
<dbReference type="GO" id="GO:0045176">
    <property type="term" value="P:apical protein localization"/>
    <property type="evidence" value="ECO:0000266"/>
    <property type="project" value="RGD"/>
</dbReference>
<dbReference type="GO" id="GO:0016477">
    <property type="term" value="P:cell migration"/>
    <property type="evidence" value="ECO:0000266"/>
    <property type="project" value="RGD"/>
</dbReference>
<dbReference type="GO" id="GO:0060996">
    <property type="term" value="P:dendritic spine development"/>
    <property type="evidence" value="ECO:0000266"/>
    <property type="project" value="RGD"/>
</dbReference>
<dbReference type="GO" id="GO:0007173">
    <property type="term" value="P:epidermal growth factor receptor signaling pathway"/>
    <property type="evidence" value="ECO:0000314"/>
    <property type="project" value="RGD"/>
</dbReference>
<dbReference type="GO" id="GO:0045197">
    <property type="term" value="P:establishment or maintenance of epithelial cell apical/basal polarity"/>
    <property type="evidence" value="ECO:0000266"/>
    <property type="project" value="RGD"/>
</dbReference>
<dbReference type="GO" id="GO:0006886">
    <property type="term" value="P:intracellular protein transport"/>
    <property type="evidence" value="ECO:0000318"/>
    <property type="project" value="GO_Central"/>
</dbReference>
<dbReference type="GO" id="GO:0007612">
    <property type="term" value="P:learning"/>
    <property type="evidence" value="ECO:0000266"/>
    <property type="project" value="RGD"/>
</dbReference>
<dbReference type="GO" id="GO:0043066">
    <property type="term" value="P:negative regulation of apoptotic process"/>
    <property type="evidence" value="ECO:0000266"/>
    <property type="project" value="RGD"/>
</dbReference>
<dbReference type="GO" id="GO:0045944">
    <property type="term" value="P:positive regulation of transcription by RNA polymerase II"/>
    <property type="evidence" value="ECO:0000266"/>
    <property type="project" value="RGD"/>
</dbReference>
<dbReference type="GO" id="GO:0061512">
    <property type="term" value="P:protein localization to cilium"/>
    <property type="evidence" value="ECO:0000266"/>
    <property type="project" value="RGD"/>
</dbReference>
<dbReference type="GO" id="GO:1902017">
    <property type="term" value="P:regulation of cilium assembly"/>
    <property type="evidence" value="ECO:0000250"/>
    <property type="project" value="UniProtKB"/>
</dbReference>
<dbReference type="GO" id="GO:0099175">
    <property type="term" value="P:regulation of postsynapse organization"/>
    <property type="evidence" value="ECO:0000266"/>
    <property type="project" value="RGD"/>
</dbReference>
<dbReference type="GO" id="GO:2000377">
    <property type="term" value="P:regulation of reactive oxygen species metabolic process"/>
    <property type="evidence" value="ECO:0000266"/>
    <property type="project" value="RGD"/>
</dbReference>
<dbReference type="GO" id="GO:0050807">
    <property type="term" value="P:regulation of synapse organization"/>
    <property type="evidence" value="ECO:0000266"/>
    <property type="project" value="RGD"/>
</dbReference>
<dbReference type="GO" id="GO:0048678">
    <property type="term" value="P:response to axon injury"/>
    <property type="evidence" value="ECO:0000270"/>
    <property type="project" value="RGD"/>
</dbReference>
<dbReference type="GO" id="GO:0006890">
    <property type="term" value="P:retrograde vesicle-mediated transport, Golgi to endoplasmic reticulum"/>
    <property type="evidence" value="ECO:0000266"/>
    <property type="project" value="RGD"/>
</dbReference>
<dbReference type="GO" id="GO:0016192">
    <property type="term" value="P:vesicle-mediated transport"/>
    <property type="evidence" value="ECO:0000318"/>
    <property type="project" value="GO_Central"/>
</dbReference>
<dbReference type="CDD" id="cd04150">
    <property type="entry name" value="Arf1_5_like"/>
    <property type="match status" value="1"/>
</dbReference>
<dbReference type="FunFam" id="3.40.50.300:FF:000024">
    <property type="entry name" value="ADP-ribosylation factor 1"/>
    <property type="match status" value="1"/>
</dbReference>
<dbReference type="Gene3D" id="3.40.50.300">
    <property type="entry name" value="P-loop containing nucleotide triphosphate hydrolases"/>
    <property type="match status" value="1"/>
</dbReference>
<dbReference type="InterPro" id="IPR045872">
    <property type="entry name" value="Arf1-5-like"/>
</dbReference>
<dbReference type="InterPro" id="IPR027417">
    <property type="entry name" value="P-loop_NTPase"/>
</dbReference>
<dbReference type="InterPro" id="IPR005225">
    <property type="entry name" value="Small_GTP-bd"/>
</dbReference>
<dbReference type="InterPro" id="IPR024156">
    <property type="entry name" value="Small_GTPase_ARF"/>
</dbReference>
<dbReference type="InterPro" id="IPR006689">
    <property type="entry name" value="Small_GTPase_ARF/SAR"/>
</dbReference>
<dbReference type="NCBIfam" id="TIGR00231">
    <property type="entry name" value="small_GTP"/>
    <property type="match status" value="1"/>
</dbReference>
<dbReference type="PANTHER" id="PTHR11711">
    <property type="entry name" value="ADP RIBOSYLATION FACTOR-RELATED"/>
    <property type="match status" value="1"/>
</dbReference>
<dbReference type="Pfam" id="PF00025">
    <property type="entry name" value="Arf"/>
    <property type="match status" value="1"/>
</dbReference>
<dbReference type="PRINTS" id="PR00328">
    <property type="entry name" value="SAR1GTPBP"/>
</dbReference>
<dbReference type="SMART" id="SM00177">
    <property type="entry name" value="ARF"/>
    <property type="match status" value="1"/>
</dbReference>
<dbReference type="SMART" id="SM00175">
    <property type="entry name" value="RAB"/>
    <property type="match status" value="1"/>
</dbReference>
<dbReference type="SMART" id="SM00178">
    <property type="entry name" value="SAR"/>
    <property type="match status" value="1"/>
</dbReference>
<dbReference type="SUPFAM" id="SSF52540">
    <property type="entry name" value="P-loop containing nucleoside triphosphate hydrolases"/>
    <property type="match status" value="1"/>
</dbReference>
<dbReference type="PROSITE" id="PS51417">
    <property type="entry name" value="ARF"/>
    <property type="match status" value="1"/>
</dbReference>
<sequence length="180" mass="20397">MGLTISSLFSRLFGKKQMRILMVGLDAAGKTTILYKLKLGEIVTTIPTIGFNVETVEYKNICFTVWDVGGQDKIRPLWRHYFQNTQGLIFVVDSNDRERIQEGAAVLQKMLLEDELQDAVLLLFANKQDLPNAMAISEMTDKLGLQSLRNRTWYVQATCATQGTGLYEGLDWLSNELSKR</sequence>
<accession>P61751</accession>
<accession>P36403</accession>
<reference key="1">
    <citation type="journal article" date="1992" name="J. Biol. Chem.">
        <title>Regulation of ADP-ribosylation factor (ARF) expression. Cross-species conservation of the developmental and tissue-specific alternative polyadenylation of ARF 4 mRNA.</title>
        <authorList>
            <person name="Mishima K."/>
            <person name="Price S.R."/>
            <person name="Nightingale M.S."/>
            <person name="Kousvelari E."/>
            <person name="Moss J."/>
            <person name="Vaughan M."/>
        </authorList>
    </citation>
    <scope>NUCLEOTIDE SEQUENCE [MRNA]</scope>
    <source>
        <tissue>Testis</tissue>
    </source>
</reference>
<reference key="2">
    <citation type="journal article" date="1996" name="Mol. Cell. Biochem.">
        <title>Interspecies relationships among ADP-ribosylation factors (ARFs): evidence of evolutionary pressure to maintain individual identities.</title>
        <authorList>
            <person name="Price S.R."/>
            <person name="Nightingale M.S."/>
            <person name="Tsuchiya M."/>
            <person name="Moss J."/>
            <person name="Vaughan M."/>
        </authorList>
    </citation>
    <scope>NUCLEOTIDE SEQUENCE [MRNA]</scope>
    <source>
        <tissue>Brain</tissue>
    </source>
</reference>
<reference key="3">
    <citation type="journal article" date="2004" name="Genome Res.">
        <title>The status, quality, and expansion of the NIH full-length cDNA project: the Mammalian Gene Collection (MGC).</title>
        <authorList>
            <consortium name="The MGC Project Team"/>
        </authorList>
    </citation>
    <scope>NUCLEOTIDE SEQUENCE [LARGE SCALE MRNA]</scope>
    <source>
        <tissue>Pituitary</tissue>
    </source>
</reference>
<organism>
    <name type="scientific">Rattus norvegicus</name>
    <name type="common">Rat</name>
    <dbReference type="NCBI Taxonomy" id="10116"/>
    <lineage>
        <taxon>Eukaryota</taxon>
        <taxon>Metazoa</taxon>
        <taxon>Chordata</taxon>
        <taxon>Craniata</taxon>
        <taxon>Vertebrata</taxon>
        <taxon>Euteleostomi</taxon>
        <taxon>Mammalia</taxon>
        <taxon>Eutheria</taxon>
        <taxon>Euarchontoglires</taxon>
        <taxon>Glires</taxon>
        <taxon>Rodentia</taxon>
        <taxon>Myomorpha</taxon>
        <taxon>Muroidea</taxon>
        <taxon>Muridae</taxon>
        <taxon>Murinae</taxon>
        <taxon>Rattus</taxon>
    </lineage>
</organism>
<name>ARF4_RAT</name>
<proteinExistence type="evidence at transcript level"/>
<protein>
    <recommendedName>
        <fullName>ADP-ribosylation factor 4</fullName>
    </recommendedName>
</protein>
<evidence type="ECO:0000250" key="1"/>
<evidence type="ECO:0000250" key="2">
    <source>
        <dbReference type="UniProtKB" id="P18085"/>
    </source>
</evidence>
<evidence type="ECO:0000305" key="3"/>
<keyword id="KW-0931">ER-Golgi transport</keyword>
<keyword id="KW-0333">Golgi apparatus</keyword>
<keyword id="KW-0342">GTP-binding</keyword>
<keyword id="KW-0449">Lipoprotein</keyword>
<keyword id="KW-0472">Membrane</keyword>
<keyword id="KW-0519">Myristate</keyword>
<keyword id="KW-0547">Nucleotide-binding</keyword>
<keyword id="KW-0597">Phosphoprotein</keyword>
<keyword id="KW-0653">Protein transport</keyword>
<keyword id="KW-1185">Reference proteome</keyword>
<keyword id="KW-0813">Transport</keyword>
<feature type="initiator methionine" description="Removed" evidence="2">
    <location>
        <position position="1"/>
    </location>
</feature>
<feature type="chain" id="PRO_0000207394" description="ADP-ribosylation factor 4">
    <location>
        <begin position="2"/>
        <end position="180"/>
    </location>
</feature>
<feature type="binding site" evidence="1">
    <location>
        <begin position="24"/>
        <end position="31"/>
    </location>
    <ligand>
        <name>GTP</name>
        <dbReference type="ChEBI" id="CHEBI:37565"/>
    </ligand>
</feature>
<feature type="binding site" evidence="1">
    <location>
        <begin position="67"/>
        <end position="71"/>
    </location>
    <ligand>
        <name>GTP</name>
        <dbReference type="ChEBI" id="CHEBI:37565"/>
    </ligand>
</feature>
<feature type="binding site" evidence="1">
    <location>
        <begin position="126"/>
        <end position="129"/>
    </location>
    <ligand>
        <name>GTP</name>
        <dbReference type="ChEBI" id="CHEBI:37565"/>
    </ligand>
</feature>
<feature type="modified residue" description="Phosphoserine" evidence="2">
    <location>
        <position position="147"/>
    </location>
</feature>
<feature type="lipid moiety-binding region" description="N-myristoyl glycine" evidence="2">
    <location>
        <position position="2"/>
    </location>
</feature>
<comment type="function">
    <text evidence="2">GTP-binding protein that functions as an allosteric activator of the cholera toxin catalytic subunit, an ADP-ribosyltransferase. Involved in protein trafficking; may modulate vesicle budding and uncoating within the Golgi apparatus. Part of the ciliary targeting complex containing Rab11, ASAP1, Rabin8/RAB3IP, RAB11FIP3 and ARF4, which direct preciliary vesicle trafficking to mother centriole and ciliogenesis initiation (By similarity).</text>
</comment>
<comment type="subunit">
    <text evidence="2">Forms a complex containing RAB11A, ASAP1, RAB3IP, RAP11FIP3 and ARF4; the complex promotes preciliary trafficking; the complex binds to RHO in photoreceptor cells and promotes RHO ciliary transport.</text>
</comment>
<comment type="subcellular location">
    <subcellularLocation>
        <location evidence="2">Golgi apparatus</location>
    </subcellularLocation>
    <subcellularLocation>
        <location evidence="2">Membrane</location>
        <topology evidence="2">Lipid-anchor</topology>
    </subcellularLocation>
</comment>
<comment type="similarity">
    <text evidence="3">Belongs to the small GTPase superfamily. Arf family.</text>
</comment>